<dbReference type="EC" id="2.1.1.45" evidence="2"/>
<dbReference type="EMBL" id="AE005174">
    <property type="protein sequence ID" value="AAG57938.1"/>
    <property type="molecule type" value="Genomic_DNA"/>
</dbReference>
<dbReference type="EMBL" id="BA000007">
    <property type="protein sequence ID" value="BAB37107.1"/>
    <property type="molecule type" value="Genomic_DNA"/>
</dbReference>
<dbReference type="PIR" id="D91089">
    <property type="entry name" value="D91089"/>
</dbReference>
<dbReference type="PIR" id="F85934">
    <property type="entry name" value="F85934"/>
</dbReference>
<dbReference type="RefSeq" id="NP_311711.1">
    <property type="nucleotide sequence ID" value="NC_002695.1"/>
</dbReference>
<dbReference type="RefSeq" id="WP_000816232.1">
    <property type="nucleotide sequence ID" value="NZ_VOAI01000003.1"/>
</dbReference>
<dbReference type="PDB" id="4LRR">
    <property type="method" value="X-ray"/>
    <property type="resolution" value="2.41 A"/>
    <property type="chains" value="A=1-264"/>
</dbReference>
<dbReference type="PDBsum" id="4LRR"/>
<dbReference type="SMR" id="P0A886"/>
<dbReference type="STRING" id="155864.Z4144"/>
<dbReference type="GeneID" id="916501"/>
<dbReference type="GeneID" id="93779171"/>
<dbReference type="KEGG" id="ece:Z4144"/>
<dbReference type="KEGG" id="ecs:ECs_3684"/>
<dbReference type="PATRIC" id="fig|386585.9.peg.3851"/>
<dbReference type="eggNOG" id="COG0207">
    <property type="taxonomic scope" value="Bacteria"/>
</dbReference>
<dbReference type="HOGENOM" id="CLU_021669_0_0_6"/>
<dbReference type="OMA" id="AYGRFWR"/>
<dbReference type="SABIO-RK" id="P0A886"/>
<dbReference type="UniPathway" id="UPA00575"/>
<dbReference type="EvolutionaryTrace" id="P0A886"/>
<dbReference type="Proteomes" id="UP000000558">
    <property type="component" value="Chromosome"/>
</dbReference>
<dbReference type="Proteomes" id="UP000002519">
    <property type="component" value="Chromosome"/>
</dbReference>
<dbReference type="GO" id="GO:0005829">
    <property type="term" value="C:cytosol"/>
    <property type="evidence" value="ECO:0007669"/>
    <property type="project" value="TreeGrafter"/>
</dbReference>
<dbReference type="GO" id="GO:0004799">
    <property type="term" value="F:thymidylate synthase activity"/>
    <property type="evidence" value="ECO:0007669"/>
    <property type="project" value="UniProtKB-UniRule"/>
</dbReference>
<dbReference type="GO" id="GO:0006231">
    <property type="term" value="P:dTMP biosynthetic process"/>
    <property type="evidence" value="ECO:0007669"/>
    <property type="project" value="UniProtKB-UniRule"/>
</dbReference>
<dbReference type="GO" id="GO:0006235">
    <property type="term" value="P:dTTP biosynthetic process"/>
    <property type="evidence" value="ECO:0007669"/>
    <property type="project" value="UniProtKB-UniRule"/>
</dbReference>
<dbReference type="GO" id="GO:0032259">
    <property type="term" value="P:methylation"/>
    <property type="evidence" value="ECO:0007669"/>
    <property type="project" value="UniProtKB-KW"/>
</dbReference>
<dbReference type="CDD" id="cd00351">
    <property type="entry name" value="TS_Pyrimidine_HMase"/>
    <property type="match status" value="1"/>
</dbReference>
<dbReference type="FunFam" id="3.30.572.10:FF:000001">
    <property type="entry name" value="Thymidylate synthase"/>
    <property type="match status" value="1"/>
</dbReference>
<dbReference type="Gene3D" id="3.30.572.10">
    <property type="entry name" value="Thymidylate synthase/dCMP hydroxymethylase domain"/>
    <property type="match status" value="1"/>
</dbReference>
<dbReference type="HAMAP" id="MF_00008">
    <property type="entry name" value="Thymidy_synth_bact"/>
    <property type="match status" value="1"/>
</dbReference>
<dbReference type="InterPro" id="IPR045097">
    <property type="entry name" value="Thymidate_synth/dCMP_Mease"/>
</dbReference>
<dbReference type="InterPro" id="IPR023451">
    <property type="entry name" value="Thymidate_synth/dCMP_Mease_dom"/>
</dbReference>
<dbReference type="InterPro" id="IPR036926">
    <property type="entry name" value="Thymidate_synth/dCMP_Mease_sf"/>
</dbReference>
<dbReference type="InterPro" id="IPR000398">
    <property type="entry name" value="Thymidylate_synthase"/>
</dbReference>
<dbReference type="InterPro" id="IPR020940">
    <property type="entry name" value="Thymidylate_synthase_AS"/>
</dbReference>
<dbReference type="NCBIfam" id="NF002497">
    <property type="entry name" value="PRK01827.1-3"/>
    <property type="match status" value="1"/>
</dbReference>
<dbReference type="NCBIfam" id="NF002499">
    <property type="entry name" value="PRK01827.1-5"/>
    <property type="match status" value="1"/>
</dbReference>
<dbReference type="NCBIfam" id="TIGR03284">
    <property type="entry name" value="thym_sym"/>
    <property type="match status" value="2"/>
</dbReference>
<dbReference type="PANTHER" id="PTHR11548:SF9">
    <property type="entry name" value="THYMIDYLATE SYNTHASE"/>
    <property type="match status" value="1"/>
</dbReference>
<dbReference type="PANTHER" id="PTHR11548">
    <property type="entry name" value="THYMIDYLATE SYNTHASE 1"/>
    <property type="match status" value="1"/>
</dbReference>
<dbReference type="Pfam" id="PF00303">
    <property type="entry name" value="Thymidylat_synt"/>
    <property type="match status" value="1"/>
</dbReference>
<dbReference type="PRINTS" id="PR00108">
    <property type="entry name" value="THYMDSNTHASE"/>
</dbReference>
<dbReference type="SUPFAM" id="SSF55831">
    <property type="entry name" value="Thymidylate synthase/dCMP hydroxymethylase"/>
    <property type="match status" value="1"/>
</dbReference>
<dbReference type="PROSITE" id="PS00091">
    <property type="entry name" value="THYMIDYLATE_SYNTHASE"/>
    <property type="match status" value="1"/>
</dbReference>
<accession>P0A886</accession>
<accession>P00470</accession>
<reference key="1">
    <citation type="journal article" date="2001" name="Nature">
        <title>Genome sequence of enterohaemorrhagic Escherichia coli O157:H7.</title>
        <authorList>
            <person name="Perna N.T."/>
            <person name="Plunkett G. III"/>
            <person name="Burland V."/>
            <person name="Mau B."/>
            <person name="Glasner J.D."/>
            <person name="Rose D.J."/>
            <person name="Mayhew G.F."/>
            <person name="Evans P.S."/>
            <person name="Gregor J."/>
            <person name="Kirkpatrick H.A."/>
            <person name="Posfai G."/>
            <person name="Hackett J."/>
            <person name="Klink S."/>
            <person name="Boutin A."/>
            <person name="Shao Y."/>
            <person name="Miller L."/>
            <person name="Grotbeck E.J."/>
            <person name="Davis N.W."/>
            <person name="Lim A."/>
            <person name="Dimalanta E.T."/>
            <person name="Potamousis K."/>
            <person name="Apodaca J."/>
            <person name="Anantharaman T.S."/>
            <person name="Lin J."/>
            <person name="Yen G."/>
            <person name="Schwartz D.C."/>
            <person name="Welch R.A."/>
            <person name="Blattner F.R."/>
        </authorList>
    </citation>
    <scope>NUCLEOTIDE SEQUENCE [LARGE SCALE GENOMIC DNA]</scope>
    <source>
        <strain>O157:H7 / EDL933 / ATCC 700927 / EHEC</strain>
    </source>
</reference>
<reference key="2">
    <citation type="journal article" date="2001" name="DNA Res.">
        <title>Complete genome sequence of enterohemorrhagic Escherichia coli O157:H7 and genomic comparison with a laboratory strain K-12.</title>
        <authorList>
            <person name="Hayashi T."/>
            <person name="Makino K."/>
            <person name="Ohnishi M."/>
            <person name="Kurokawa K."/>
            <person name="Ishii K."/>
            <person name="Yokoyama K."/>
            <person name="Han C.-G."/>
            <person name="Ohtsubo E."/>
            <person name="Nakayama K."/>
            <person name="Murata T."/>
            <person name="Tanaka M."/>
            <person name="Tobe T."/>
            <person name="Iida T."/>
            <person name="Takami H."/>
            <person name="Honda T."/>
            <person name="Sasakawa C."/>
            <person name="Ogasawara N."/>
            <person name="Yasunaga T."/>
            <person name="Kuhara S."/>
            <person name="Shiba T."/>
            <person name="Hattori M."/>
            <person name="Shinagawa H."/>
        </authorList>
    </citation>
    <scope>NUCLEOTIDE SEQUENCE [LARGE SCALE GENOMIC DNA]</scope>
    <source>
        <strain>O157:H7 / Sakai / RIMD 0509952 / EHEC</strain>
    </source>
</reference>
<feature type="chain" id="PRO_0000140955" description="Thymidylate synthase">
    <location>
        <begin position="1"/>
        <end position="264"/>
    </location>
</feature>
<feature type="active site" description="Nucleophile" evidence="2">
    <location>
        <position position="146"/>
    </location>
</feature>
<feature type="binding site" description="in other chain" evidence="2">
    <location>
        <position position="21"/>
    </location>
    <ligand>
        <name>dUMP</name>
        <dbReference type="ChEBI" id="CHEBI:246422"/>
        <note>ligand shared between dimeric partners</note>
    </ligand>
</feature>
<feature type="binding site" evidence="2">
    <location>
        <position position="51"/>
    </location>
    <ligand>
        <name>(6R)-5,10-methylene-5,6,7,8-tetrahydrofolate</name>
        <dbReference type="ChEBI" id="CHEBI:15636"/>
    </ligand>
</feature>
<feature type="binding site" evidence="2">
    <location>
        <begin position="126"/>
        <end position="127"/>
    </location>
    <ligand>
        <name>dUMP</name>
        <dbReference type="ChEBI" id="CHEBI:246422"/>
        <note>ligand shared between dimeric partners</note>
    </ligand>
</feature>
<feature type="binding site" description="in other chain" evidence="2">
    <location>
        <begin position="166"/>
        <end position="169"/>
    </location>
    <ligand>
        <name>dUMP</name>
        <dbReference type="ChEBI" id="CHEBI:246422"/>
        <note>ligand shared between dimeric partners</note>
    </ligand>
</feature>
<feature type="binding site" evidence="2">
    <location>
        <position position="169"/>
    </location>
    <ligand>
        <name>(6R)-5,10-methylene-5,6,7,8-tetrahydrofolate</name>
        <dbReference type="ChEBI" id="CHEBI:15636"/>
    </ligand>
</feature>
<feature type="binding site" description="in other chain" evidence="2">
    <location>
        <position position="177"/>
    </location>
    <ligand>
        <name>dUMP</name>
        <dbReference type="ChEBI" id="CHEBI:246422"/>
        <note>ligand shared between dimeric partners</note>
    </ligand>
</feature>
<feature type="binding site" description="in other chain" evidence="2">
    <location>
        <begin position="207"/>
        <end position="209"/>
    </location>
    <ligand>
        <name>dUMP</name>
        <dbReference type="ChEBI" id="CHEBI:246422"/>
        <note>ligand shared between dimeric partners</note>
    </ligand>
</feature>
<feature type="binding site" evidence="2">
    <location>
        <position position="263"/>
    </location>
    <ligand>
        <name>(6R)-5,10-methylene-5,6,7,8-tetrahydrofolate</name>
        <dbReference type="ChEBI" id="CHEBI:15636"/>
    </ligand>
</feature>
<feature type="helix" evidence="3">
    <location>
        <begin position="2"/>
        <end position="14"/>
    </location>
</feature>
<feature type="strand" evidence="3">
    <location>
        <begin position="16"/>
        <end position="19"/>
    </location>
</feature>
<feature type="strand" evidence="3">
    <location>
        <begin position="25"/>
        <end position="37"/>
    </location>
</feature>
<feature type="helix" evidence="3">
    <location>
        <begin position="38"/>
        <end position="40"/>
    </location>
</feature>
<feature type="strand" evidence="3">
    <location>
        <begin position="46"/>
        <end position="48"/>
    </location>
</feature>
<feature type="helix" evidence="3">
    <location>
        <begin position="53"/>
        <end position="64"/>
    </location>
</feature>
<feature type="helix" evidence="3">
    <location>
        <begin position="70"/>
        <end position="74"/>
    </location>
</feature>
<feature type="turn" evidence="3">
    <location>
        <begin position="79"/>
        <end position="83"/>
    </location>
</feature>
<feature type="helix" evidence="3">
    <location>
        <begin position="94"/>
        <end position="100"/>
    </location>
</feature>
<feature type="helix" evidence="3">
    <location>
        <begin position="111"/>
        <end position="121"/>
    </location>
</feature>
<feature type="strand" evidence="3">
    <location>
        <begin position="129"/>
        <end position="131"/>
    </location>
</feature>
<feature type="helix" evidence="3">
    <location>
        <begin position="135"/>
        <end position="140"/>
    </location>
</feature>
<feature type="strand" evidence="3">
    <location>
        <begin position="141"/>
        <end position="143"/>
    </location>
</feature>
<feature type="strand" evidence="3">
    <location>
        <begin position="146"/>
        <end position="155"/>
    </location>
</feature>
<feature type="strand" evidence="3">
    <location>
        <begin position="158"/>
        <end position="169"/>
    </location>
</feature>
<feature type="turn" evidence="3">
    <location>
        <begin position="170"/>
        <end position="173"/>
    </location>
</feature>
<feature type="helix" evidence="3">
    <location>
        <begin position="174"/>
        <end position="191"/>
    </location>
</feature>
<feature type="strand" evidence="3">
    <location>
        <begin position="195"/>
        <end position="209"/>
    </location>
</feature>
<feature type="helix" evidence="3">
    <location>
        <begin position="210"/>
        <end position="212"/>
    </location>
</feature>
<feature type="helix" evidence="3">
    <location>
        <begin position="213"/>
        <end position="220"/>
    </location>
</feature>
<feature type="strand" evidence="3">
    <location>
        <begin position="229"/>
        <end position="232"/>
    </location>
</feature>
<feature type="helix" evidence="3">
    <location>
        <begin position="244"/>
        <end position="246"/>
    </location>
</feature>
<feature type="strand" evidence="3">
    <location>
        <begin position="247"/>
        <end position="251"/>
    </location>
</feature>
<comment type="function">
    <text evidence="2">Catalyzes the reductive methylation of 2'-deoxyuridine-5'-monophosphate (dUMP) to 2'-deoxythymidine-5'-monophosphate (dTMP) while utilizing 5,10-methylenetetrahydrofolate (mTHF) as the methyl donor and reductant in the reaction, yielding dihydrofolate (DHF) as a by-product. This enzymatic reaction provides an intracellular de novo source of dTMP, an essential precursor for DNA biosynthesis.</text>
</comment>
<comment type="catalytic activity">
    <reaction evidence="2">
        <text>dUMP + (6R)-5,10-methylene-5,6,7,8-tetrahydrofolate = 7,8-dihydrofolate + dTMP</text>
        <dbReference type="Rhea" id="RHEA:12104"/>
        <dbReference type="ChEBI" id="CHEBI:15636"/>
        <dbReference type="ChEBI" id="CHEBI:57451"/>
        <dbReference type="ChEBI" id="CHEBI:63528"/>
        <dbReference type="ChEBI" id="CHEBI:246422"/>
        <dbReference type="EC" id="2.1.1.45"/>
    </reaction>
</comment>
<comment type="pathway">
    <text evidence="2">Pyrimidine metabolism; dTTP biosynthesis.</text>
</comment>
<comment type="subunit">
    <text evidence="2">Homodimer.</text>
</comment>
<comment type="subcellular location">
    <subcellularLocation>
        <location evidence="2">Cytoplasm</location>
    </subcellularLocation>
</comment>
<comment type="PTM">
    <text evidence="1">The N-terminal is probably N-(dihydroxymethyl)-methionine, the hydrated form of N-formylmethionine.</text>
</comment>
<comment type="similarity">
    <text evidence="2">Belongs to the thymidylate synthase family. Bacterial-type ThyA subfamily.</text>
</comment>
<organism>
    <name type="scientific">Escherichia coli O157:H7</name>
    <dbReference type="NCBI Taxonomy" id="83334"/>
    <lineage>
        <taxon>Bacteria</taxon>
        <taxon>Pseudomonadati</taxon>
        <taxon>Pseudomonadota</taxon>
        <taxon>Gammaproteobacteria</taxon>
        <taxon>Enterobacterales</taxon>
        <taxon>Enterobacteriaceae</taxon>
        <taxon>Escherichia</taxon>
    </lineage>
</organism>
<protein>
    <recommendedName>
        <fullName evidence="2">Thymidylate synthase</fullName>
        <shortName evidence="2">TS</shortName>
        <shortName evidence="2">TSase</shortName>
        <ecNumber evidence="2">2.1.1.45</ecNumber>
    </recommendedName>
</protein>
<keyword id="KW-0002">3D-structure</keyword>
<keyword id="KW-0963">Cytoplasm</keyword>
<keyword id="KW-0291">Formylation</keyword>
<keyword id="KW-0489">Methyltransferase</keyword>
<keyword id="KW-0545">Nucleotide biosynthesis</keyword>
<keyword id="KW-1185">Reference proteome</keyword>
<keyword id="KW-0808">Transferase</keyword>
<name>TYSY_ECO57</name>
<gene>
    <name evidence="2" type="primary">thyA</name>
    <name type="ordered locus">Z4144</name>
    <name type="ordered locus">ECs3684</name>
</gene>
<proteinExistence type="evidence at protein level"/>
<sequence>MKQYLELMQKVLDEGTQKNDRTGTGTLSIFGHQMRFNLQDGFPLVTTKRCHLRSIIHELLWFLQGDTNIAYLHENNVTIWDEWADENGDLGPVYGKQWRAWPTPDGRHIDQITTVLNQLKNDPDSRRIIVSAWNVGELDKMALAPCHAFFQFYVADGKLSCQLYQRSCDVFLGLPFNIASYALLVHMMAQQCDLEVGDFVWTGGDTHLYSNHMDQTHLQLSREPRPLPKLIIKRKPESIFDYRFEDFEIEGYDPHPGIKAPVAI</sequence>
<evidence type="ECO:0000250" key="1"/>
<evidence type="ECO:0000255" key="2">
    <source>
        <dbReference type="HAMAP-Rule" id="MF_00008"/>
    </source>
</evidence>
<evidence type="ECO:0007829" key="3">
    <source>
        <dbReference type="PDB" id="4LRR"/>
    </source>
</evidence>